<name>HIS7_LISW6</name>
<feature type="chain" id="PRO_1000010289" description="Imidazoleglycerol-phosphate dehydratase">
    <location>
        <begin position="1"/>
        <end position="194"/>
    </location>
</feature>
<gene>
    <name evidence="1" type="primary">hisB</name>
    <name type="ordered locus">lwe0532</name>
</gene>
<dbReference type="EC" id="4.2.1.19" evidence="1"/>
<dbReference type="EMBL" id="AM263198">
    <property type="protein sequence ID" value="CAK19950.1"/>
    <property type="molecule type" value="Genomic_DNA"/>
</dbReference>
<dbReference type="RefSeq" id="WP_011701377.1">
    <property type="nucleotide sequence ID" value="NC_008555.1"/>
</dbReference>
<dbReference type="SMR" id="A0AG18"/>
<dbReference type="STRING" id="386043.lwe0532"/>
<dbReference type="GeneID" id="61188420"/>
<dbReference type="KEGG" id="lwe:lwe0532"/>
<dbReference type="eggNOG" id="COG0131">
    <property type="taxonomic scope" value="Bacteria"/>
</dbReference>
<dbReference type="HOGENOM" id="CLU_044308_3_0_9"/>
<dbReference type="OrthoDB" id="9790411at2"/>
<dbReference type="UniPathway" id="UPA00031">
    <property type="reaction ID" value="UER00011"/>
</dbReference>
<dbReference type="Proteomes" id="UP000000779">
    <property type="component" value="Chromosome"/>
</dbReference>
<dbReference type="GO" id="GO:0005737">
    <property type="term" value="C:cytoplasm"/>
    <property type="evidence" value="ECO:0007669"/>
    <property type="project" value="UniProtKB-SubCell"/>
</dbReference>
<dbReference type="GO" id="GO:0004424">
    <property type="term" value="F:imidazoleglycerol-phosphate dehydratase activity"/>
    <property type="evidence" value="ECO:0007669"/>
    <property type="project" value="UniProtKB-UniRule"/>
</dbReference>
<dbReference type="GO" id="GO:0000105">
    <property type="term" value="P:L-histidine biosynthetic process"/>
    <property type="evidence" value="ECO:0007669"/>
    <property type="project" value="UniProtKB-UniRule"/>
</dbReference>
<dbReference type="CDD" id="cd07914">
    <property type="entry name" value="IGPD"/>
    <property type="match status" value="1"/>
</dbReference>
<dbReference type="FunFam" id="3.30.230.40:FF:000001">
    <property type="entry name" value="Imidazoleglycerol-phosphate dehydratase HisB"/>
    <property type="match status" value="1"/>
</dbReference>
<dbReference type="FunFam" id="3.30.230.40:FF:000003">
    <property type="entry name" value="Imidazoleglycerol-phosphate dehydratase HisB"/>
    <property type="match status" value="1"/>
</dbReference>
<dbReference type="Gene3D" id="3.30.230.40">
    <property type="entry name" value="Imidazole glycerol phosphate dehydratase, domain 1"/>
    <property type="match status" value="2"/>
</dbReference>
<dbReference type="HAMAP" id="MF_00076">
    <property type="entry name" value="HisB"/>
    <property type="match status" value="1"/>
</dbReference>
<dbReference type="InterPro" id="IPR038494">
    <property type="entry name" value="IGPD_sf"/>
</dbReference>
<dbReference type="InterPro" id="IPR000807">
    <property type="entry name" value="ImidazoleglycerolP_deHydtase"/>
</dbReference>
<dbReference type="InterPro" id="IPR020565">
    <property type="entry name" value="ImidazoleglycerP_deHydtase_CS"/>
</dbReference>
<dbReference type="InterPro" id="IPR020568">
    <property type="entry name" value="Ribosomal_Su5_D2-typ_SF"/>
</dbReference>
<dbReference type="NCBIfam" id="NF002107">
    <property type="entry name" value="PRK00951.1-2"/>
    <property type="match status" value="1"/>
</dbReference>
<dbReference type="NCBIfam" id="NF002111">
    <property type="entry name" value="PRK00951.2-1"/>
    <property type="match status" value="1"/>
</dbReference>
<dbReference type="NCBIfam" id="NF002114">
    <property type="entry name" value="PRK00951.2-4"/>
    <property type="match status" value="1"/>
</dbReference>
<dbReference type="PANTHER" id="PTHR23133:SF2">
    <property type="entry name" value="IMIDAZOLEGLYCEROL-PHOSPHATE DEHYDRATASE"/>
    <property type="match status" value="1"/>
</dbReference>
<dbReference type="PANTHER" id="PTHR23133">
    <property type="entry name" value="IMIDAZOLEGLYCEROL-PHOSPHATE DEHYDRATASE HIS7"/>
    <property type="match status" value="1"/>
</dbReference>
<dbReference type="Pfam" id="PF00475">
    <property type="entry name" value="IGPD"/>
    <property type="match status" value="1"/>
</dbReference>
<dbReference type="SUPFAM" id="SSF54211">
    <property type="entry name" value="Ribosomal protein S5 domain 2-like"/>
    <property type="match status" value="2"/>
</dbReference>
<dbReference type="PROSITE" id="PS00954">
    <property type="entry name" value="IGP_DEHYDRATASE_1"/>
    <property type="match status" value="1"/>
</dbReference>
<dbReference type="PROSITE" id="PS00955">
    <property type="entry name" value="IGP_DEHYDRATASE_2"/>
    <property type="match status" value="1"/>
</dbReference>
<keyword id="KW-0028">Amino-acid biosynthesis</keyword>
<keyword id="KW-0963">Cytoplasm</keyword>
<keyword id="KW-0368">Histidine biosynthesis</keyword>
<keyword id="KW-0456">Lyase</keyword>
<proteinExistence type="inferred from homology"/>
<evidence type="ECO:0000255" key="1">
    <source>
        <dbReference type="HAMAP-Rule" id="MF_00076"/>
    </source>
</evidence>
<reference key="1">
    <citation type="journal article" date="2006" name="J. Bacteriol.">
        <title>Whole-genome sequence of Listeria welshimeri reveals common steps in genome reduction with Listeria innocua as compared to Listeria monocytogenes.</title>
        <authorList>
            <person name="Hain T."/>
            <person name="Steinweg C."/>
            <person name="Kuenne C.T."/>
            <person name="Billion A."/>
            <person name="Ghai R."/>
            <person name="Chatterjee S.S."/>
            <person name="Domann E."/>
            <person name="Kaerst U."/>
            <person name="Goesmann A."/>
            <person name="Bekel T."/>
            <person name="Bartels D."/>
            <person name="Kaiser O."/>
            <person name="Meyer F."/>
            <person name="Puehler A."/>
            <person name="Weisshaar B."/>
            <person name="Wehland J."/>
            <person name="Liang C."/>
            <person name="Dandekar T."/>
            <person name="Lampidis R."/>
            <person name="Kreft J."/>
            <person name="Goebel W."/>
            <person name="Chakraborty T."/>
        </authorList>
    </citation>
    <scope>NUCLEOTIDE SEQUENCE [LARGE SCALE GENOMIC DNA]</scope>
    <source>
        <strain>ATCC 35897 / DSM 20650 / CCUG 15529 / CIP 8149 / NCTC 11857 / SLCC 5334 / V8</strain>
    </source>
</reference>
<accession>A0AG18</accession>
<comment type="catalytic activity">
    <reaction evidence="1">
        <text>D-erythro-1-(imidazol-4-yl)glycerol 3-phosphate = 3-(imidazol-4-yl)-2-oxopropyl phosphate + H2O</text>
        <dbReference type="Rhea" id="RHEA:11040"/>
        <dbReference type="ChEBI" id="CHEBI:15377"/>
        <dbReference type="ChEBI" id="CHEBI:57766"/>
        <dbReference type="ChEBI" id="CHEBI:58278"/>
        <dbReference type="EC" id="4.2.1.19"/>
    </reaction>
</comment>
<comment type="pathway">
    <text evidence="1">Amino-acid biosynthesis; L-histidine biosynthesis; L-histidine from 5-phospho-alpha-D-ribose 1-diphosphate: step 6/9.</text>
</comment>
<comment type="subcellular location">
    <subcellularLocation>
        <location evidence="1">Cytoplasm</location>
    </subcellularLocation>
</comment>
<comment type="similarity">
    <text evidence="1">Belongs to the imidazoleglycerol-phosphate dehydratase family.</text>
</comment>
<organism>
    <name type="scientific">Listeria welshimeri serovar 6b (strain ATCC 35897 / DSM 20650 / CCUG 15529 / CIP 8149 / NCTC 11857 / SLCC 5334 / V8)</name>
    <dbReference type="NCBI Taxonomy" id="386043"/>
    <lineage>
        <taxon>Bacteria</taxon>
        <taxon>Bacillati</taxon>
        <taxon>Bacillota</taxon>
        <taxon>Bacilli</taxon>
        <taxon>Bacillales</taxon>
        <taxon>Listeriaceae</taxon>
        <taxon>Listeria</taxon>
    </lineage>
</organism>
<protein>
    <recommendedName>
        <fullName evidence="1">Imidazoleglycerol-phosphate dehydratase</fullName>
        <shortName evidence="1">IGPD</shortName>
        <ecNumber evidence="1">4.2.1.19</ecNumber>
    </recommendedName>
</protein>
<sequence length="194" mass="21235">MRTATKTRVTAETSIELSINLDSAAESTIATGIGFLDHMLTLFAKHSRINLNVKADGDTRVDAHHTVEDVGITLGICLKEALGDKASINRYGSTYVPMDESLGFCALDLSGRSYLVFDAELTNPKLGDFDTELVEEFFQAVAFNTGMNLHLRVLYGKNTHHKIESLFKAFGRALREAITINPEIKGVNSTKGVL</sequence>